<feature type="chain" id="PRO_0000297326" description="3-methyl-2-oxobutanoate hydroxymethyltransferase">
    <location>
        <begin position="1"/>
        <end position="272"/>
    </location>
</feature>
<feature type="active site" description="Proton acceptor" evidence="1">
    <location>
        <position position="185"/>
    </location>
</feature>
<feature type="binding site" evidence="1">
    <location>
        <begin position="42"/>
        <end position="43"/>
    </location>
    <ligand>
        <name>3-methyl-2-oxobutanoate</name>
        <dbReference type="ChEBI" id="CHEBI:11851"/>
    </ligand>
</feature>
<feature type="binding site" evidence="1">
    <location>
        <position position="42"/>
    </location>
    <ligand>
        <name>Mg(2+)</name>
        <dbReference type="ChEBI" id="CHEBI:18420"/>
    </ligand>
</feature>
<feature type="binding site" evidence="1">
    <location>
        <position position="86"/>
    </location>
    <ligand>
        <name>3-methyl-2-oxobutanoate</name>
        <dbReference type="ChEBI" id="CHEBI:11851"/>
    </ligand>
</feature>
<feature type="binding site" evidence="1">
    <location>
        <position position="86"/>
    </location>
    <ligand>
        <name>Mg(2+)</name>
        <dbReference type="ChEBI" id="CHEBI:18420"/>
    </ligand>
</feature>
<feature type="binding site" evidence="1">
    <location>
        <position position="116"/>
    </location>
    <ligand>
        <name>3-methyl-2-oxobutanoate</name>
        <dbReference type="ChEBI" id="CHEBI:11851"/>
    </ligand>
</feature>
<feature type="binding site" evidence="1">
    <location>
        <position position="118"/>
    </location>
    <ligand>
        <name>Mg(2+)</name>
        <dbReference type="ChEBI" id="CHEBI:18420"/>
    </ligand>
</feature>
<evidence type="ECO:0000255" key="1">
    <source>
        <dbReference type="HAMAP-Rule" id="MF_00156"/>
    </source>
</evidence>
<keyword id="KW-0963">Cytoplasm</keyword>
<keyword id="KW-0460">Magnesium</keyword>
<keyword id="KW-0479">Metal-binding</keyword>
<keyword id="KW-0566">Pantothenate biosynthesis</keyword>
<keyword id="KW-1185">Reference proteome</keyword>
<keyword id="KW-0808">Transferase</keyword>
<reference key="1">
    <citation type="journal article" date="2003" name="Nature">
        <title>Genome divergence in two Prochlorococcus ecotypes reflects oceanic niche differentiation.</title>
        <authorList>
            <person name="Rocap G."/>
            <person name="Larimer F.W."/>
            <person name="Lamerdin J.E."/>
            <person name="Malfatti S."/>
            <person name="Chain P."/>
            <person name="Ahlgren N.A."/>
            <person name="Arellano A."/>
            <person name="Coleman M."/>
            <person name="Hauser L."/>
            <person name="Hess W.R."/>
            <person name="Johnson Z.I."/>
            <person name="Land M.L."/>
            <person name="Lindell D."/>
            <person name="Post A.F."/>
            <person name="Regala W."/>
            <person name="Shah M."/>
            <person name="Shaw S.L."/>
            <person name="Steglich C."/>
            <person name="Sullivan M.B."/>
            <person name="Ting C.S."/>
            <person name="Tolonen A."/>
            <person name="Webb E.A."/>
            <person name="Zinser E.R."/>
            <person name="Chisholm S.W."/>
        </authorList>
    </citation>
    <scope>NUCLEOTIDE SEQUENCE [LARGE SCALE GENOMIC DNA]</scope>
    <source>
        <strain>MIT 9313</strain>
    </source>
</reference>
<protein>
    <recommendedName>
        <fullName evidence="1">3-methyl-2-oxobutanoate hydroxymethyltransferase</fullName>
        <ecNumber evidence="1">2.1.2.11</ecNumber>
    </recommendedName>
    <alternativeName>
        <fullName evidence="1">Ketopantoate hydroxymethyltransferase</fullName>
        <shortName evidence="1">KPHMT</shortName>
    </alternativeName>
</protein>
<gene>
    <name evidence="1" type="primary">panB</name>
    <name type="ordered locus">PMT_0318</name>
</gene>
<comment type="function">
    <text evidence="1">Catalyzes the reversible reaction in which hydroxymethyl group from 5,10-methylenetetrahydrofolate is transferred onto alpha-ketoisovalerate to form ketopantoate.</text>
</comment>
<comment type="catalytic activity">
    <reaction evidence="1">
        <text>3-methyl-2-oxobutanoate + (6R)-5,10-methylene-5,6,7,8-tetrahydrofolate + H2O = 2-dehydropantoate + (6S)-5,6,7,8-tetrahydrofolate</text>
        <dbReference type="Rhea" id="RHEA:11824"/>
        <dbReference type="ChEBI" id="CHEBI:11561"/>
        <dbReference type="ChEBI" id="CHEBI:11851"/>
        <dbReference type="ChEBI" id="CHEBI:15377"/>
        <dbReference type="ChEBI" id="CHEBI:15636"/>
        <dbReference type="ChEBI" id="CHEBI:57453"/>
        <dbReference type="EC" id="2.1.2.11"/>
    </reaction>
</comment>
<comment type="cofactor">
    <cofactor evidence="1">
        <name>Mg(2+)</name>
        <dbReference type="ChEBI" id="CHEBI:18420"/>
    </cofactor>
    <text evidence="1">Binds 1 Mg(2+) ion per subunit.</text>
</comment>
<comment type="pathway">
    <text evidence="1">Cofactor biosynthesis; (R)-pantothenate biosynthesis; (R)-pantoate from 3-methyl-2-oxobutanoate: step 1/2.</text>
</comment>
<comment type="subunit">
    <text evidence="1">Homodecamer; pentamer of dimers.</text>
</comment>
<comment type="subcellular location">
    <subcellularLocation>
        <location evidence="1">Cytoplasm</location>
    </subcellularLocation>
</comment>
<comment type="similarity">
    <text evidence="1">Belongs to the PanB family.</text>
</comment>
<name>PANB_PROMM</name>
<sequence length="272" mass="28921">MRPSELTQLKQDGRAISILTAWDGISAALVEAAGADVVLVGDSLAMVALCHATTLPVTVEQMLHHTKAVGRGFTRPLPQQPLVVCDLPFLSYQCGEDKAVAAAGSLLKHSCAAAVKLEGAEPEVLAVIERLVRMGIPVMGHLGLTPQAVHQLGYRRQAEDPRSQAQMLQQAKQLEQAGCFALVVEHVPSSIARCLSQQLTIPVIGIGAGEDCDGQVRVTADLLGLTPSQPPFSQPLIQGRQLCVEALQGWVKQLHQQAKTATTTTSPPEPDC</sequence>
<dbReference type="EC" id="2.1.2.11" evidence="1"/>
<dbReference type="EMBL" id="BX548175">
    <property type="protein sequence ID" value="CAE20493.1"/>
    <property type="molecule type" value="Genomic_DNA"/>
</dbReference>
<dbReference type="RefSeq" id="WP_011129697.1">
    <property type="nucleotide sequence ID" value="NC_005071.1"/>
</dbReference>
<dbReference type="SMR" id="Q7TV48"/>
<dbReference type="KEGG" id="pmt:PMT_0318"/>
<dbReference type="eggNOG" id="COG0413">
    <property type="taxonomic scope" value="Bacteria"/>
</dbReference>
<dbReference type="HOGENOM" id="CLU_036645_1_0_3"/>
<dbReference type="OrthoDB" id="9781789at2"/>
<dbReference type="UniPathway" id="UPA00028">
    <property type="reaction ID" value="UER00003"/>
</dbReference>
<dbReference type="Proteomes" id="UP000001423">
    <property type="component" value="Chromosome"/>
</dbReference>
<dbReference type="GO" id="GO:0005737">
    <property type="term" value="C:cytoplasm"/>
    <property type="evidence" value="ECO:0007669"/>
    <property type="project" value="UniProtKB-SubCell"/>
</dbReference>
<dbReference type="GO" id="GO:0003864">
    <property type="term" value="F:3-methyl-2-oxobutanoate hydroxymethyltransferase activity"/>
    <property type="evidence" value="ECO:0007669"/>
    <property type="project" value="UniProtKB-UniRule"/>
</dbReference>
<dbReference type="GO" id="GO:0000287">
    <property type="term" value="F:magnesium ion binding"/>
    <property type="evidence" value="ECO:0007669"/>
    <property type="project" value="TreeGrafter"/>
</dbReference>
<dbReference type="GO" id="GO:0015940">
    <property type="term" value="P:pantothenate biosynthetic process"/>
    <property type="evidence" value="ECO:0007669"/>
    <property type="project" value="UniProtKB-UniRule"/>
</dbReference>
<dbReference type="CDD" id="cd06557">
    <property type="entry name" value="KPHMT-like"/>
    <property type="match status" value="1"/>
</dbReference>
<dbReference type="Gene3D" id="3.20.20.60">
    <property type="entry name" value="Phosphoenolpyruvate-binding domains"/>
    <property type="match status" value="1"/>
</dbReference>
<dbReference type="HAMAP" id="MF_00156">
    <property type="entry name" value="PanB"/>
    <property type="match status" value="1"/>
</dbReference>
<dbReference type="InterPro" id="IPR003700">
    <property type="entry name" value="Pantoate_hydroxy_MeTrfase"/>
</dbReference>
<dbReference type="InterPro" id="IPR015813">
    <property type="entry name" value="Pyrv/PenolPyrv_kinase-like_dom"/>
</dbReference>
<dbReference type="InterPro" id="IPR040442">
    <property type="entry name" value="Pyrv_kinase-like_dom_sf"/>
</dbReference>
<dbReference type="NCBIfam" id="TIGR00222">
    <property type="entry name" value="panB"/>
    <property type="match status" value="1"/>
</dbReference>
<dbReference type="NCBIfam" id="NF001452">
    <property type="entry name" value="PRK00311.1"/>
    <property type="match status" value="1"/>
</dbReference>
<dbReference type="PANTHER" id="PTHR20881">
    <property type="entry name" value="3-METHYL-2-OXOBUTANOATE HYDROXYMETHYLTRANSFERASE"/>
    <property type="match status" value="1"/>
</dbReference>
<dbReference type="PANTHER" id="PTHR20881:SF0">
    <property type="entry name" value="3-METHYL-2-OXOBUTANOATE HYDROXYMETHYLTRANSFERASE"/>
    <property type="match status" value="1"/>
</dbReference>
<dbReference type="Pfam" id="PF02548">
    <property type="entry name" value="Pantoate_transf"/>
    <property type="match status" value="1"/>
</dbReference>
<dbReference type="PIRSF" id="PIRSF000388">
    <property type="entry name" value="Pantoate_hydroxy_MeTrfase"/>
    <property type="match status" value="1"/>
</dbReference>
<dbReference type="SUPFAM" id="SSF51621">
    <property type="entry name" value="Phosphoenolpyruvate/pyruvate domain"/>
    <property type="match status" value="1"/>
</dbReference>
<organism>
    <name type="scientific">Prochlorococcus marinus (strain MIT 9313)</name>
    <dbReference type="NCBI Taxonomy" id="74547"/>
    <lineage>
        <taxon>Bacteria</taxon>
        <taxon>Bacillati</taxon>
        <taxon>Cyanobacteriota</taxon>
        <taxon>Cyanophyceae</taxon>
        <taxon>Synechococcales</taxon>
        <taxon>Prochlorococcaceae</taxon>
        <taxon>Prochlorococcus</taxon>
    </lineage>
</organism>
<proteinExistence type="inferred from homology"/>
<accession>Q7TV48</accession>